<sequence length="531" mass="57014">MTDTIFDYVIVGGGTAGSVLANRLSARPENRVLLIEAGIDTPENNIPPEIHDGLRPWLPRLSGDKFFWPNLTIHRAAEHPGITREPQFYEQGRLLGGGSSVNMVVSNRGLPRDYDEWQALGADGWDWQGVLPYFIKTERDADYGDDPLHGNAGPIPIGRVDSRHWSDFTVAATQALEAAGLPNIHDQNARFDDGYFPPAFTLKGEERFSAARGYLDASVRVRPNLSLWTESRVLKLLTTGNAITGVSVLRGRETLQVQAREVILTAGALQSPAILLRTGIGPAADLHALGIPVLADRPGVGRNLWEHSSIGVVAPLTEQARADASTGKAGSRHQLGIRASSGVDPATPSDLFLHIGADPVSGLASAVFWVNKPSSTGWLKLKDADPFSYPDVDFNLLSDPRDLGRLKAGLRLITHYFAAPSLAKYGLALALSRFAAPQPGGPLLNDLLQDEAALERYLRTNVGGVWHASGTARIGRADDSQAVVDKAGRVYGVTGLRVADASIMPTVPTANTNLPTLMLAEKIADAILTQA</sequence>
<protein>
    <recommendedName>
        <fullName evidence="6">5-(hydroxymethyl)furfural oxidase</fullName>
        <ecNumber evidence="1 2">1.1.3.47</ecNumber>
    </recommendedName>
    <alternativeName>
        <fullName evidence="5">5-hydroxymethylfurfural oxidase</fullName>
        <shortName evidence="5">HMFO</shortName>
    </alternativeName>
    <alternativeName>
        <fullName evidence="8">Thiol oxidase</fullName>
        <ecNumber evidence="3">1.8.3.-</ecNumber>
    </alternativeName>
</protein>
<comment type="function">
    <text evidence="1 2 3">Involved in the degradation and detoxification of 5-(hydroxymethyl)furfural (HMF) by mediating its oxidation to furan-2,5-dicarboxylate (FDCA), a biobased platform chemical for the production of polymers. Active with a wide range of aromatic and aliphatic primary alcohols and aldehydes: acts on alcohol groups and requires the spontaneous hydration of aldehyde groups for their oxidation (PubMed:24271187, PubMed:24802551). To a lesser extent, is also able to catalyze the oxidation of thiols that are structurally similar to its alcohol substrates, yielding the corresponding thiocarbonyls (PubMed:25284255).</text>
</comment>
<comment type="catalytic activity">
    <reaction evidence="1 2">
        <text>5-hydroxymethylfurfural + 3 O2 + 2 H2O = 2,5-dicarboxyfuran + 3 H2O2 + 2 H(+)</text>
        <dbReference type="Rhea" id="RHEA:32683"/>
        <dbReference type="ChEBI" id="CHEBI:15377"/>
        <dbReference type="ChEBI" id="CHEBI:15378"/>
        <dbReference type="ChEBI" id="CHEBI:15379"/>
        <dbReference type="ChEBI" id="CHEBI:16240"/>
        <dbReference type="ChEBI" id="CHEBI:83389"/>
        <dbReference type="ChEBI" id="CHEBI:412516"/>
        <dbReference type="EC" id="1.1.3.47"/>
    </reaction>
</comment>
<comment type="catalytic activity">
    <reaction evidence="3">
        <text>benzylthiol + O2 = benzothialdehyde + H2O2</text>
        <dbReference type="Rhea" id="RHEA:53792"/>
        <dbReference type="ChEBI" id="CHEBI:15379"/>
        <dbReference type="ChEBI" id="CHEBI:16240"/>
        <dbReference type="ChEBI" id="CHEBI:137674"/>
        <dbReference type="ChEBI" id="CHEBI:137675"/>
    </reaction>
</comment>
<comment type="cofactor">
    <cofactor evidence="1 9">
        <name>FAD</name>
        <dbReference type="ChEBI" id="CHEBI:57692"/>
    </cofactor>
</comment>
<comment type="biophysicochemical properties">
    <kinetics>
        <KM evidence="1">1.4 mM for 5-(hydroxymethyl)furfural</KM>
        <KM evidence="1">1.5 mM for 1,4-benzenedimethanol</KM>
        <KM evidence="1">1.4 mM for 1,3-benzenedimethanol</KM>
        <KM evidence="1">1.3 mM for benzyl alcohol</KM>
        <KM evidence="1">0.3 mM for 4-hydroxybenzyl alcohol</KM>
        <KM evidence="1">1.44 mM for 4-aminobenzyl alcohol</KM>
        <KM evidence="1">0.08 mM for 4-chlorobenzyl alcohol</KM>
        <KM evidence="1">0.07 mM for cinnamyl alcohol</KM>
        <KM evidence="1">0.59 mM for 2,4-hexadien-1-ol</KM>
        <KM evidence="1">0.73 mM for vanillyl alcohol</KM>
        <KM evidence="3">3.5 mM for phenylmethanethiol</KM>
        <KM evidence="3">15 mM for (4-nitrophenyl)methanethiol</KM>
        <KM evidence="3">0.078 mM for (4-nitrophenyl)methanol</KM>
        <text evidence="1 3">kcat is 9.9 sec(-1) with 5-(hydroxymethyl)furfural as substrate. kcat is 21.1 sec(-1) with 1,4-benzenedimethanol as substrate. kcat is 14.0 sec(-1) with 1,3-benzenedimethanol as substrate. kcat is 13.5 sec(-1) with benzyl alcohol as substrate. kcat is 7.2 sec(-1) with 4-hydroxybenzyl alcohol as substrate. kcat is 17.1 sec(-1) with 4-aminobenzyl alcohol as substrate. kcat is 9.5 sec(-1) with 4-chlorobenzyl alcohol as substrate. kcat is 17.0 sec(-1) with cinnamyl alcohol as substrate. kcat is 13.3 sec(-1) with 2,4-hexadien-1-ol as substrate. kcat is 21.0 sec(-1) with vanillyl alcohol as substrate (PubMed:24271187). kcat is 2.1 sec(-1) with phenylmethanethiol as substrate. kcat is 3.0 sec(-1) with (4-nitrophenyl)phenylmethanethiol as substrate. kcat is 4.5 sec(-1) with (4-nitrophenyl)methanol as substrate (PubMed:25284255).</text>
    </kinetics>
    <phDependence>
        <text evidence="1">Optimum pH is 8.0.</text>
    </phDependence>
    <temperatureDependence>
        <text evidence="1">Optimum temperature is 55 degrees Celsius.</text>
    </temperatureDependence>
</comment>
<comment type="subunit">
    <text evidence="4">Monomer.</text>
</comment>
<comment type="biotechnology">
    <text evidence="9">Because 5-hydroxymethylfurfural can be derived from sugars, the enzyme is of particular interest for the production of biobased plastic materials in an environmentally friendly industrial process.</text>
</comment>
<comment type="miscellaneous">
    <text evidence="3">At pH 7.0, phenylmethanethiol is oxidized to the corresponding aromatic thioaldehyde, benzothialdehyde, and no formation of 1,2-dibenzyldisulfane is observed, demonstrating that HMFO does not catalyze the formation of disulfide bonds. At pH 8.0, two products are formed, benzothialdehyde and benzaldehyde; this suggests that the thioaldehyde is slowly hydrated, yielding the aldehyde as the final product.</text>
</comment>
<comment type="similarity">
    <text evidence="6">Belongs to the GMC oxidoreductase family.</text>
</comment>
<evidence type="ECO:0000269" key="1">
    <source>
    </source>
</evidence>
<evidence type="ECO:0000269" key="2">
    <source>
    </source>
</evidence>
<evidence type="ECO:0000269" key="3">
    <source>
    </source>
</evidence>
<evidence type="ECO:0000269" key="4">
    <source ref="5"/>
</evidence>
<evidence type="ECO:0000303" key="5">
    <source>
    </source>
</evidence>
<evidence type="ECO:0000305" key="6"/>
<evidence type="ECO:0000305" key="7">
    <source>
    </source>
</evidence>
<evidence type="ECO:0000305" key="8">
    <source>
    </source>
</evidence>
<evidence type="ECO:0000305" key="9">
    <source ref="5"/>
</evidence>
<evidence type="ECO:0000312" key="10">
    <source>
        <dbReference type="EMBL" id="ADQ83320.1"/>
    </source>
</evidence>
<evidence type="ECO:0007744" key="11">
    <source>
        <dbReference type="PDB" id="4UDP"/>
    </source>
</evidence>
<evidence type="ECO:0007744" key="12">
    <source>
        <dbReference type="PDB" id="4UDQ"/>
    </source>
</evidence>
<evidence type="ECO:0007744" key="13">
    <source>
        <dbReference type="PDB" id="4UDR"/>
    </source>
</evidence>
<evidence type="ECO:0007829" key="14">
    <source>
        <dbReference type="PDB" id="4UDP"/>
    </source>
</evidence>
<evidence type="ECO:0007829" key="15">
    <source>
        <dbReference type="PDB" id="4UDQ"/>
    </source>
</evidence>
<evidence type="ECO:0007829" key="16">
    <source>
        <dbReference type="PDB" id="6F97"/>
    </source>
</evidence>
<keyword id="KW-0002">3D-structure</keyword>
<keyword id="KW-0274">FAD</keyword>
<keyword id="KW-0285">Flavoprotein</keyword>
<keyword id="KW-0560">Oxidoreductase</keyword>
<gene>
    <name evidence="10" type="ordered locus">MPQ_0130</name>
</gene>
<accession>E4QP00</accession>
<dbReference type="EC" id="1.1.3.47" evidence="1 2"/>
<dbReference type="EC" id="1.8.3.-" evidence="3"/>
<dbReference type="EMBL" id="CP002252">
    <property type="protein sequence ID" value="ADQ83320.1"/>
    <property type="molecule type" value="Genomic_DNA"/>
</dbReference>
<dbReference type="RefSeq" id="WP_013440946.1">
    <property type="nucleotide sequence ID" value="NC_014733.1"/>
</dbReference>
<dbReference type="PDB" id="4UDP">
    <property type="method" value="X-ray"/>
    <property type="resolution" value="1.90 A"/>
    <property type="chains" value="A/B=1-531"/>
</dbReference>
<dbReference type="PDB" id="4UDQ">
    <property type="method" value="X-ray"/>
    <property type="resolution" value="1.60 A"/>
    <property type="chains" value="A/B=1-531"/>
</dbReference>
<dbReference type="PDB" id="4UDR">
    <property type="method" value="X-ray"/>
    <property type="resolution" value="1.60 A"/>
    <property type="chains" value="A/B=1-531"/>
</dbReference>
<dbReference type="PDB" id="6F97">
    <property type="method" value="X-ray"/>
    <property type="resolution" value="1.90 A"/>
    <property type="chains" value="A/B=1-531"/>
</dbReference>
<dbReference type="PDBsum" id="4UDP"/>
<dbReference type="PDBsum" id="4UDQ"/>
<dbReference type="PDBsum" id="4UDR"/>
<dbReference type="PDBsum" id="6F97"/>
<dbReference type="SMR" id="E4QP00"/>
<dbReference type="KEGG" id="mep:MPQ_0130"/>
<dbReference type="HOGENOM" id="CLU_002865_7_1_4"/>
<dbReference type="BioCyc" id="MetaCyc:MONOMER-17167"/>
<dbReference type="BRENDA" id="1.1.3.47">
    <property type="organism ID" value="13773"/>
</dbReference>
<dbReference type="EvolutionaryTrace" id="E4QP00"/>
<dbReference type="GO" id="GO:0071949">
    <property type="term" value="F:FAD binding"/>
    <property type="evidence" value="ECO:0000314"/>
    <property type="project" value="UniProtKB"/>
</dbReference>
<dbReference type="GO" id="GO:0016670">
    <property type="term" value="F:oxidoreductase activity, acting on a sulfur group of donors, oxygen as acceptor"/>
    <property type="evidence" value="ECO:0000314"/>
    <property type="project" value="UniProtKB"/>
</dbReference>
<dbReference type="GO" id="GO:0016899">
    <property type="term" value="F:oxidoreductase activity, acting on the CH-OH group of donors, oxygen as acceptor"/>
    <property type="evidence" value="ECO:0000314"/>
    <property type="project" value="UniProtKB"/>
</dbReference>
<dbReference type="Gene3D" id="3.30.410.40">
    <property type="match status" value="1"/>
</dbReference>
<dbReference type="Gene3D" id="3.50.50.60">
    <property type="entry name" value="FAD/NAD(P)-binding domain"/>
    <property type="match status" value="1"/>
</dbReference>
<dbReference type="InterPro" id="IPR036188">
    <property type="entry name" value="FAD/NAD-bd_sf"/>
</dbReference>
<dbReference type="InterPro" id="IPR012132">
    <property type="entry name" value="GMC_OxRdtase"/>
</dbReference>
<dbReference type="InterPro" id="IPR000172">
    <property type="entry name" value="GMC_OxRdtase_N"/>
</dbReference>
<dbReference type="InterPro" id="IPR007867">
    <property type="entry name" value="GMC_OxRtase_C"/>
</dbReference>
<dbReference type="PANTHER" id="PTHR11552:SF147">
    <property type="entry name" value="CHOLINE DEHYDROGENASE, MITOCHONDRIAL"/>
    <property type="match status" value="1"/>
</dbReference>
<dbReference type="PANTHER" id="PTHR11552">
    <property type="entry name" value="GLUCOSE-METHANOL-CHOLINE GMC OXIDOREDUCTASE"/>
    <property type="match status" value="1"/>
</dbReference>
<dbReference type="Pfam" id="PF05199">
    <property type="entry name" value="GMC_oxred_C"/>
    <property type="match status" value="1"/>
</dbReference>
<dbReference type="Pfam" id="PF00732">
    <property type="entry name" value="GMC_oxred_N"/>
    <property type="match status" value="1"/>
</dbReference>
<dbReference type="PIRSF" id="PIRSF000137">
    <property type="entry name" value="Alcohol_oxidase"/>
    <property type="match status" value="1"/>
</dbReference>
<dbReference type="SUPFAM" id="SSF54373">
    <property type="entry name" value="FAD-linked reductases, C-terminal domain"/>
    <property type="match status" value="1"/>
</dbReference>
<dbReference type="SUPFAM" id="SSF51905">
    <property type="entry name" value="FAD/NAD(P)-binding domain"/>
    <property type="match status" value="1"/>
</dbReference>
<organism>
    <name type="scientific">Methylovorus sp. (strain MP688)</name>
    <dbReference type="NCBI Taxonomy" id="887061"/>
    <lineage>
        <taxon>Bacteria</taxon>
        <taxon>Pseudomonadati</taxon>
        <taxon>Pseudomonadota</taxon>
        <taxon>Betaproteobacteria</taxon>
        <taxon>Nitrosomonadales</taxon>
        <taxon>Methylophilaceae</taxon>
        <taxon>Methylovorus</taxon>
    </lineage>
</organism>
<proteinExistence type="evidence at protein level"/>
<reference key="1">
    <citation type="journal article" date="2011" name="J. Bacteriol.">
        <title>Complete genome sequence of the bacterium Methylovorus sp. strain MP688, a high-level producer of pyrroloquinolone quinone.</title>
        <authorList>
            <person name="Xiong X.H."/>
            <person name="Zhi J.J."/>
            <person name="Yang L."/>
            <person name="Wang J.H."/>
            <person name="Zhao Y."/>
            <person name="Wang X."/>
            <person name="Cui Y.J."/>
            <person name="Dong F."/>
            <person name="Li M.X."/>
            <person name="Yang Y.X."/>
            <person name="Wei N."/>
            <person name="An J.J."/>
            <person name="Du B.H."/>
            <person name="Liang L."/>
            <person name="Zhang J.S."/>
            <person name="Zhou W."/>
            <person name="Cheng S.F."/>
            <person name="He T."/>
            <person name="Wang L."/>
            <person name="Chen H.P."/>
            <person name="Liu D.S."/>
            <person name="Zhang W.C."/>
        </authorList>
    </citation>
    <scope>NUCLEOTIDE SEQUENCE [LARGE SCALE GENOMIC DNA]</scope>
    <source>
        <strain>MP688</strain>
    </source>
</reference>
<reference key="2">
    <citation type="journal article" date="2014" name="Angew. Chem. Int. Ed. Engl.">
        <title>Enzyme-catalyzed oxidation of 5-hydroxymethylfurfural to furan-2,5-dicarboxylic acid.</title>
        <authorList>
            <person name="Dijkman W.P."/>
            <person name="Groothuis D.E."/>
            <person name="Fraaije M.W."/>
        </authorList>
    </citation>
    <scope>FUNCTION</scope>
    <scope>CATALYTIC ACTIVITY</scope>
</reference>
<reference key="3">
    <citation type="journal article" date="2014" name="Angew. Chem. Int. Ed. Engl.">
        <title>The oxidation of thiols by flavoprotein oxidases: a biocatalytic route to reactive thiocarbonyls.</title>
        <authorList>
            <person name="Ewing T.A."/>
            <person name="Dijkman W.P."/>
            <person name="Vervoort J.M."/>
            <person name="Fraaije M.W."/>
            <person name="van Berkel W.J."/>
        </authorList>
    </citation>
    <scope>FUNCTION AS A THIOL OXIDASE</scope>
    <scope>CATALYTIC ACTIVITY</scope>
    <scope>BIOPHYSICOCHEMICAL PROPERTIES</scope>
    <source>
        <strain>MP688</strain>
    </source>
</reference>
<reference key="4">
    <citation type="journal article" date="2014" name="Appl. Environ. Microbiol.">
        <title>Discovery and characterization of a 5-hydroxymethylfurfural oxidase from Methylovorus sp. strain MP688.</title>
        <authorList>
            <person name="Dijkman W.P."/>
            <person name="Fraaije M.W."/>
        </authorList>
    </citation>
    <scope>FUNCTION</scope>
    <scope>CATALYTIC ACTIVITY</scope>
    <scope>COFACTOR</scope>
    <scope>BIOPHYSICOCHEMICAL PROPERTIES</scope>
    <scope>ACTIVE SITE</scope>
    <scope>MUTAGENESIS OF HIS-467</scope>
    <source>
        <strain>MP688</strain>
    </source>
</reference>
<reference key="5">
    <citation type="journal article" date="2015" name="ACS Catal.">
        <title>Structure-based enzyme tailoring of 5-hydroxymethylfurfural oxidase.</title>
        <authorList>
            <person name="Dijkman W.P."/>
            <person name="Binda C."/>
            <person name="Fraaije M.W."/>
            <person name="Mattevi A."/>
        </authorList>
    </citation>
    <scope>X-RAY CRYSTALLOGRAPHY (1.60 ANGSTROMS) OF WILD-TYPE AND MUTANT ALA-467 IN COMPLEXES WITH FAD</scope>
    <scope>COFACTOR</scope>
    <scope>BIOTECHNOLOGY</scope>
    <scope>MUTAGENESIS OF VAL-101; MET-103; VAL-367; TRP-369; VAL-465; TRP-466 AND ASN-511</scope>
    <scope>ACTIVE SITE</scope>
    <scope>SUBUNIT</scope>
    <source>
        <strain>MP688</strain>
    </source>
</reference>
<feature type="chain" id="PRO_0000432710" description="5-(hydroxymethyl)furfural oxidase">
    <location>
        <begin position="1"/>
        <end position="531"/>
    </location>
</feature>
<feature type="active site" description="Proton acceptor" evidence="7 9">
    <location>
        <position position="467"/>
    </location>
</feature>
<feature type="binding site" evidence="9 11 12 13">
    <location>
        <begin position="15"/>
        <end position="16"/>
    </location>
    <ligand>
        <name>FAD</name>
        <dbReference type="ChEBI" id="CHEBI:57692"/>
    </ligand>
</feature>
<feature type="binding site" evidence="9 11 12 13">
    <location>
        <begin position="36"/>
        <end position="37"/>
    </location>
    <ligand>
        <name>FAD</name>
        <dbReference type="ChEBI" id="CHEBI:57692"/>
    </ligand>
</feature>
<feature type="binding site" evidence="9 11 12 13">
    <location>
        <position position="68"/>
    </location>
    <ligand>
        <name>FAD</name>
        <dbReference type="ChEBI" id="CHEBI:57692"/>
    </ligand>
</feature>
<feature type="binding site" evidence="9 11 12 13">
    <location>
        <position position="94"/>
    </location>
    <ligand>
        <name>FAD</name>
        <dbReference type="ChEBI" id="CHEBI:57692"/>
    </ligand>
</feature>
<feature type="binding site" evidence="9 11 12 13">
    <location>
        <position position="98"/>
    </location>
    <ligand>
        <name>FAD</name>
        <dbReference type="ChEBI" id="CHEBI:57692"/>
    </ligand>
</feature>
<feature type="binding site" evidence="9 11 12 13">
    <location>
        <begin position="102"/>
        <end position="105"/>
    </location>
    <ligand>
        <name>FAD</name>
        <dbReference type="ChEBI" id="CHEBI:57692"/>
    </ligand>
</feature>
<feature type="binding site" evidence="9 11 12 13">
    <location>
        <position position="233"/>
    </location>
    <ligand>
        <name>FAD</name>
        <dbReference type="ChEBI" id="CHEBI:57692"/>
    </ligand>
</feature>
<feature type="binding site" evidence="13">
    <location>
        <position position="466"/>
    </location>
    <ligand>
        <name>FAD</name>
        <dbReference type="ChEBI" id="CHEBI:57692"/>
    </ligand>
</feature>
<feature type="binding site" evidence="9 11 12 13">
    <location>
        <position position="501"/>
    </location>
    <ligand>
        <name>FAD</name>
        <dbReference type="ChEBI" id="CHEBI:57692"/>
    </ligand>
</feature>
<feature type="binding site" evidence="9 11 12 13">
    <location>
        <begin position="512"/>
        <end position="513"/>
    </location>
    <ligand>
        <name>FAD</name>
        <dbReference type="ChEBI" id="CHEBI:57692"/>
    </ligand>
</feature>
<feature type="mutagenesis site" description="Abolishes activity." evidence="4">
    <original>V</original>
    <variation>H</variation>
    <location>
        <position position="101"/>
    </location>
</feature>
<feature type="mutagenesis site" description="16-fold reduction in catalytic efficiency on vanillyl alcohol." evidence="4">
    <original>M</original>
    <variation>A</variation>
    <location>
        <position position="103"/>
    </location>
</feature>
<feature type="mutagenesis site" description="1.6-fold reduction in catalytic efficiency on vanillyl alcohol. Shows significantly improved activity on the aldehyde 5-formyl-2-furancarboxylate, which results in a better 5-hydroxymethylfurfural to 2,5-furandicarboxylate conversion." evidence="4">
    <original>V</original>
    <variation>K</variation>
    <location>
        <position position="367"/>
    </location>
</feature>
<feature type="mutagenesis site" description="1.4-fold reduction in catalytic efficiency on vanillyl alcohol. Shows significantly improved activity on the aldehyde 5-formyl-2-furancarboxylate, which results in a better 5-hydroxymethylfurfural to 2,5-furandicarboxylate conversion. Displays a catalytic efficiency toward 5-formyl-2-furancarboxylate that is over 1000-fold higher than that for wild-type; when associated with F-466." evidence="4">
    <original>V</original>
    <variation>R</variation>
    <location>
        <position position="367"/>
    </location>
</feature>
<feature type="mutagenesis site" description="7.5-fold reduction in catalytic efficiency on vanillyl alcohol." evidence="4">
    <original>W</original>
    <variation>A</variation>
    <location>
        <position position="369"/>
    </location>
</feature>
<feature type="mutagenesis site" description="18-fold reduction in catalytic efficiency on vanillyl alcohol." evidence="4">
    <original>V</original>
    <variation>A</variation>
    <location>
        <position position="465"/>
    </location>
</feature>
<feature type="mutagenesis site" description="39-fold reduction in catalytic efficiency on vanillyl alcohol. In contrast to wild-type, is active on secondary alcohols, such as (S)-1-phenylethanol, and is strictly enantionselective as this mutant has no activity on (R)-1-phenylethanol. Shows increased activity on the aldehyde 5-formyl-2-furancarboxylate." evidence="4">
    <original>W</original>
    <variation>A</variation>
    <location>
        <position position="466"/>
    </location>
</feature>
<feature type="mutagenesis site" description="3.4-fold reduction in catalytic efficiency on vanillyl alcohol. In contrast to wild-type, is active on secondary alcohols, such as (S)-1-phenylethanol, and is strictly enantionselective as this mutant has no activity on (R)-1-phenylethanol. Shows increased activity on the aldehyde 5-formyl-2-furancarboxylate. Displays a catalytic efficiency toward 5-formyl-2-furancarboxylate that is over 1000-fold higher than that for wild-type; when associated with R-367." evidence="4">
    <original>W</original>
    <variation>F</variation>
    <location>
        <position position="466"/>
    </location>
</feature>
<feature type="mutagenesis site" description="Abolishes activity." evidence="1">
    <original>H</original>
    <variation>A</variation>
    <location>
        <position position="467"/>
    </location>
</feature>
<feature type="mutagenesis site" description="53-fold reduction in catalytic efficiency on vanillyl alcohol." evidence="4">
    <original>N</original>
    <variation>A</variation>
    <location>
        <position position="511"/>
    </location>
</feature>
<feature type="strand" evidence="15">
    <location>
        <begin position="6"/>
        <end position="11"/>
    </location>
</feature>
<feature type="helix" evidence="15">
    <location>
        <begin position="15"/>
        <end position="25"/>
    </location>
</feature>
<feature type="strand" evidence="15">
    <location>
        <begin position="32"/>
        <end position="35"/>
    </location>
</feature>
<feature type="strand" evidence="15">
    <location>
        <begin position="37"/>
        <end position="39"/>
    </location>
</feature>
<feature type="helix" evidence="15">
    <location>
        <begin position="43"/>
        <end position="45"/>
    </location>
</feature>
<feature type="helix" evidence="15">
    <location>
        <begin position="48"/>
        <end position="51"/>
    </location>
</feature>
<feature type="strand" evidence="14">
    <location>
        <begin position="52"/>
        <end position="55"/>
    </location>
</feature>
<feature type="helix" evidence="15">
    <location>
        <begin position="58"/>
        <end position="61"/>
    </location>
</feature>
<feature type="turn" evidence="15">
    <location>
        <begin position="63"/>
        <end position="66"/>
    </location>
</feature>
<feature type="strand" evidence="15">
    <location>
        <begin position="72"/>
        <end position="76"/>
    </location>
</feature>
<feature type="turn" evidence="15">
    <location>
        <begin position="95"/>
        <end position="97"/>
    </location>
</feature>
<feature type="helix" evidence="15">
    <location>
        <begin position="98"/>
        <end position="101"/>
    </location>
</feature>
<feature type="helix" evidence="15">
    <location>
        <begin position="111"/>
        <end position="119"/>
    </location>
</feature>
<feature type="helix" evidence="15">
    <location>
        <begin position="127"/>
        <end position="137"/>
    </location>
</feature>
<feature type="strand" evidence="15">
    <location>
        <begin position="138"/>
        <end position="140"/>
    </location>
</feature>
<feature type="turn" evidence="15">
    <location>
        <begin position="141"/>
        <end position="145"/>
    </location>
</feature>
<feature type="strand" evidence="15">
    <location>
        <begin position="151"/>
        <end position="158"/>
    </location>
</feature>
<feature type="helix" evidence="15">
    <location>
        <begin position="162"/>
        <end position="164"/>
    </location>
</feature>
<feature type="helix" evidence="15">
    <location>
        <begin position="167"/>
        <end position="178"/>
    </location>
</feature>
<feature type="turn" evidence="15">
    <location>
        <begin position="187"/>
        <end position="189"/>
    </location>
</feature>
<feature type="strand" evidence="15">
    <location>
        <begin position="192"/>
        <end position="196"/>
    </location>
</feature>
<feature type="helix" evidence="15">
    <location>
        <begin position="210"/>
        <end position="214"/>
    </location>
</feature>
<feature type="helix" evidence="15">
    <location>
        <begin position="217"/>
        <end position="220"/>
    </location>
</feature>
<feature type="strand" evidence="15">
    <location>
        <begin position="225"/>
        <end position="228"/>
    </location>
</feature>
<feature type="strand" evidence="15">
    <location>
        <begin position="230"/>
        <end position="239"/>
    </location>
</feature>
<feature type="strand" evidence="15">
    <location>
        <begin position="242"/>
        <end position="250"/>
    </location>
</feature>
<feature type="strand" evidence="15">
    <location>
        <begin position="253"/>
        <end position="264"/>
    </location>
</feature>
<feature type="turn" evidence="15">
    <location>
        <begin position="268"/>
        <end position="270"/>
    </location>
</feature>
<feature type="helix" evidence="15">
    <location>
        <begin position="271"/>
        <end position="278"/>
    </location>
</feature>
<feature type="helix" evidence="15">
    <location>
        <begin position="283"/>
        <end position="288"/>
    </location>
</feature>
<feature type="strand" evidence="15">
    <location>
        <begin position="294"/>
        <end position="296"/>
    </location>
</feature>
<feature type="turn" evidence="15">
    <location>
        <begin position="298"/>
        <end position="301"/>
    </location>
</feature>
<feature type="strand" evidence="15">
    <location>
        <begin position="303"/>
        <end position="305"/>
    </location>
</feature>
<feature type="strand" evidence="15">
    <location>
        <begin position="308"/>
        <end position="315"/>
    </location>
</feature>
<feature type="helix" evidence="15">
    <location>
        <begin position="318"/>
        <end position="324"/>
    </location>
</feature>
<feature type="strand" evidence="15">
    <location>
        <begin position="336"/>
        <end position="339"/>
    </location>
</feature>
<feature type="strand" evidence="15">
    <location>
        <begin position="351"/>
        <end position="358"/>
    </location>
</feature>
<feature type="turn" evidence="15">
    <location>
        <begin position="359"/>
        <end position="362"/>
    </location>
</feature>
<feature type="strand" evidence="15">
    <location>
        <begin position="363"/>
        <end position="372"/>
    </location>
</feature>
<feature type="strand" evidence="15">
    <location>
        <begin position="377"/>
        <end position="380"/>
    </location>
</feature>
<feature type="strand" evidence="15">
    <location>
        <begin position="382"/>
        <end position="384"/>
    </location>
</feature>
<feature type="strand" evidence="15">
    <location>
        <begin position="391"/>
        <end position="396"/>
    </location>
</feature>
<feature type="helix" evidence="15">
    <location>
        <begin position="400"/>
        <end position="418"/>
    </location>
</feature>
<feature type="helix" evidence="15">
    <location>
        <begin position="420"/>
        <end position="423"/>
    </location>
</feature>
<feature type="strand" evidence="15">
    <location>
        <begin position="430"/>
        <end position="432"/>
    </location>
</feature>
<feature type="strand" evidence="15">
    <location>
        <begin position="434"/>
        <end position="436"/>
    </location>
</feature>
<feature type="helix" evidence="15">
    <location>
        <begin position="444"/>
        <end position="447"/>
    </location>
</feature>
<feature type="helix" evidence="15">
    <location>
        <begin position="451"/>
        <end position="461"/>
    </location>
</feature>
<feature type="strand" evidence="16">
    <location>
        <begin position="488"/>
        <end position="490"/>
    </location>
</feature>
<feature type="strand" evidence="15">
    <location>
        <begin position="493"/>
        <end position="498"/>
    </location>
</feature>
<feature type="helix" evidence="15">
    <location>
        <begin position="501"/>
        <end position="503"/>
    </location>
</feature>
<feature type="helix" evidence="15">
    <location>
        <begin position="513"/>
        <end position="528"/>
    </location>
</feature>
<name>HMFO_METS6</name>